<comment type="function">
    <text evidence="1">Forms the heterodimeric complex core-binding factor (CBF) with RUNX family proteins (RUNX1, RUNX2, and RUNX3). RUNX members modulate the transcription of their target genes through recognizing the core consensus binding sequence 5'-TGTGGT-3', or very rarely, 5'-TGCGGT-3', within their regulatory regions via their runt domain, while CBFB is a non-DNA-binding regulatory subunit that allosterically enhances the sequence-specific DNA-binding capacity of RUNX. The heterodimers bind to the core site of a number of enhancers and promoters, including murine leukemia virus, polyomavirus enhancer, T-cell receptor enhancers, LCK, IL3 and GM-CSF promoters. CBF complexes repress ZBTB7B transcription factor during cytotoxic (CD8+) T cell development. They bind to RUNX-binding sequence within the ZBTB7B locus acting as transcriptional silencer and allowing for cytotoxic T cell differentiation.</text>
</comment>
<comment type="function">
    <text evidence="3 5 7 8 9 10">(Microbial infection) Following infection, hijacked by the HIV-1 Vif protein, leading to the formation a cullin-5-RING E3 ubiquitin-protein ligase complex (ECS complex) that catalyzes ubiquitination and degradation of APOBEC3F and APOBEC3G (PubMed:22190037, PubMed:31792451, PubMed:36598981, PubMed:36754086, PubMed:37419875). The complex can also ubiquitinate APOBEC3H to some extent (PubMed:37640699). Association with HIV-1 Vif protein also inhibits the transcription coactivator activity of CBFB/CBF-beta (PubMed:22190037).</text>
</comment>
<comment type="subunit">
    <text evidence="1">Heterodimer with RUNX1, RUNX2 and RUNX3. Interacts with COPRS. Found in a complex with PRMT5 and RUNX1.</text>
</comment>
<comment type="subunit">
    <text evidence="3 4 5 7 8 9 10">(Microbial infection) Interacts with HIV-1 Vif; forming an active cullin-5-RING E3 ubiquitin-protein ligase complex (ECS complex).</text>
</comment>
<comment type="interaction">
    <interactant intactId="EBI-718750">
        <id>Q13951</id>
    </interactant>
    <interactant intactId="EBI-741429">
        <id>Q9NVM9</id>
        <label>INTS13</label>
    </interactant>
    <organismsDiffer>false</organismsDiffer>
    <experiments>2</experiments>
</comment>
<comment type="interaction">
    <interactant intactId="EBI-718750">
        <id>Q13951</id>
    </interactant>
    <interactant intactId="EBI-2682460">
        <id>P11137</id>
        <label>MAP2</label>
    </interactant>
    <organismsDiffer>false</organismsDiffer>
    <experiments>2</experiments>
</comment>
<comment type="interaction">
    <interactant intactId="EBI-718750">
        <id>Q13951</id>
    </interactant>
    <interactant intactId="EBI-925904">
        <id>Q01196</id>
        <label>RUNX1</label>
    </interactant>
    <organismsDiffer>false</organismsDiffer>
    <experiments>7</experiments>
</comment>
<comment type="interaction">
    <interactant intactId="EBI-718750">
        <id>Q13951</id>
    </interactant>
    <interactant intactId="EBI-12001422">
        <id>Q01196-8</id>
        <label>RUNX1</label>
    </interactant>
    <organismsDiffer>false</organismsDiffer>
    <experiments>3</experiments>
</comment>
<comment type="interaction">
    <interactant intactId="EBI-718750">
        <id>Q13951</id>
    </interactant>
    <interactant intactId="EBI-925990">
        <id>Q13761</id>
        <label>RUNX3</label>
    </interactant>
    <organismsDiffer>false</organismsDiffer>
    <experiments>3</experiments>
</comment>
<comment type="interaction">
    <interactant intactId="EBI-718750">
        <id>Q13951</id>
    </interactant>
    <interactant intactId="EBI-12145465">
        <id>Q13761-2</id>
        <label>RUNX3</label>
    </interactant>
    <organismsDiffer>false</organismsDiffer>
    <experiments>3</experiments>
</comment>
<comment type="interaction">
    <interactant intactId="EBI-718750">
        <id>Q13951</id>
    </interactant>
    <interactant intactId="EBI-779991">
        <id>P12504</id>
        <label>vif</label>
    </interactant>
    <organismsDiffer>true</organismsDiffer>
    <experiments>10</experiments>
</comment>
<comment type="subcellular location">
    <subcellularLocation>
        <location evidence="1">Nucleus</location>
    </subcellularLocation>
</comment>
<comment type="alternative products">
    <event type="alternative splicing"/>
    <isoform>
        <id>Q13951-1</id>
        <name>1</name>
        <sequence type="displayed"/>
    </isoform>
    <isoform>
        <id>Q13951-2</id>
        <name>2</name>
        <sequence type="described" ref="VSP_036044"/>
    </isoform>
</comment>
<comment type="disease">
    <text evidence="11">A chromosomal aberration involving CBFB is associated with acute myeloid leukemia of M4EO subtype. Pericentric inversion inv(16)(p13;q22). The inversion produces a fusion protein that consists of the 165 N-terminal residues of CBF-beta (PEPB2) with the tail region of MYH11.</text>
</comment>
<comment type="disease" evidence="6">
    <disease id="DI-06534">
        <name>Cleidocranial dysplasia 2</name>
        <acronym>CLCD2</acronym>
        <description>A form of cleidocranial dysplasia, a rare skeletal disorder with significant clinical variability, even within families. Patients typically present with delayed closure of cranial sutures and fontanels with multiple Wormian bones, retarded ossification of the skull, shortening of the distal phalanges, dental anomalies including supernumerary teeth and eruption failure, clavicular hypoplasia or aplasia, wide pubic symphysis, vertebral anomalies, and short stature. Craniofacial features are subtle and characterized by prominent parietal and frontal bones, widely spaced eyes, depressed nasal bridge and small maxilla. Some CLCD2 patients present mild to moderate developmental delay. CLCD2 inheritance is autosomal dominant.</description>
        <dbReference type="MIM" id="620099"/>
    </disease>
    <text>The disease is caused by variants affecting the gene represented in this entry.</text>
</comment>
<comment type="similarity">
    <text evidence="13">Belongs to the CBF-beta family.</text>
</comment>
<comment type="online information" name="Atlas of Genetics and Cytogenetics in Oncology and Haematology">
    <link uri="https://atlasgeneticsoncology.org/gene/45/CBFb"/>
</comment>
<feature type="chain" id="PRO_0000058301" description="Core-binding factor subunit beta">
    <location>
        <begin position="1"/>
        <end position="182"/>
    </location>
</feature>
<feature type="site" description="Breakpoint for translocation to form CBF-beta-MYH11 oncogene in AML, subtype M4EO">
    <location>
        <begin position="165"/>
        <end position="166"/>
    </location>
</feature>
<feature type="splice variant" id="VSP_036044" description="In isoform 2." evidence="12">
    <original>VRVSQLLAVTGKKTTRP</original>
    <variation>ARRQQDPSPGSNLGGGDDLKLR</variation>
    <location>
        <begin position="166"/>
        <end position="182"/>
    </location>
</feature>
<feature type="sequence variant" id="VAR_087753" description="In CLCD2." evidence="6">
    <location>
        <begin position="83"/>
        <end position="182"/>
    </location>
</feature>
<feature type="sequence variant" id="VAR_036226" description="In a breast cancer sample; somatic mutation; dbSNP:rs1280921900." evidence="2">
    <original>P</original>
    <variation>A</variation>
    <location>
        <position position="100"/>
    </location>
</feature>
<feature type="mutagenesis site" description="Abolished ability to promote ubiquitination and degradation of APOBEC3F following interaction with HIV-1 Vif. Does not affect ability to promote ubiquitination and degradation of APOBEC3G following interaction with HIV-1 Vif.">
    <original>RPHEERQAR</original>
    <variation>EPHEERQAE</variation>
    <location>
        <begin position="35"/>
        <end position="43"/>
    </location>
</feature>
<feature type="mutagenesis site" description="Abolished ability to promote ubiquitination and degradation of APOBEC3F following interaction with HIV-1 Vif. Does not affect ability to promote ubiquitination and degradation of APOBEC3G following interaction with HIV-1 Vif." evidence="5">
    <original>E</original>
    <variation>K</variation>
    <location>
        <position position="54"/>
    </location>
</feature>
<feature type="helix" evidence="27">
    <location>
        <begin position="8"/>
        <end position="14"/>
    </location>
</feature>
<feature type="helix" evidence="31">
    <location>
        <begin position="18"/>
        <end position="23"/>
    </location>
</feature>
<feature type="strand" evidence="31">
    <location>
        <begin position="26"/>
        <end position="29"/>
    </location>
</feature>
<feature type="turn" evidence="31">
    <location>
        <begin position="31"/>
        <end position="34"/>
    </location>
</feature>
<feature type="helix" evidence="31">
    <location>
        <begin position="37"/>
        <end position="49"/>
    </location>
</feature>
<feature type="strand" evidence="31">
    <location>
        <begin position="55"/>
        <end position="59"/>
    </location>
</feature>
<feature type="strand" evidence="31">
    <location>
        <begin position="62"/>
        <end position="70"/>
    </location>
</feature>
<feature type="helix" evidence="31">
    <location>
        <begin position="71"/>
        <end position="73"/>
    </location>
</feature>
<feature type="strand" evidence="31">
    <location>
        <begin position="85"/>
        <end position="88"/>
    </location>
</feature>
<feature type="strand" evidence="28">
    <location>
        <begin position="89"/>
        <end position="91"/>
    </location>
</feature>
<feature type="strand" evidence="31">
    <location>
        <begin position="94"/>
        <end position="103"/>
    </location>
</feature>
<feature type="strand" evidence="31">
    <location>
        <begin position="106"/>
        <end position="115"/>
    </location>
</feature>
<feature type="turn" evidence="31">
    <location>
        <begin position="116"/>
        <end position="119"/>
    </location>
</feature>
<feature type="strand" evidence="31">
    <location>
        <begin position="120"/>
        <end position="127"/>
    </location>
</feature>
<feature type="helix" evidence="27">
    <location>
        <begin position="129"/>
        <end position="134"/>
    </location>
</feature>
<feature type="helix" evidence="30">
    <location>
        <begin position="137"/>
        <end position="148"/>
    </location>
</feature>
<feature type="turn" evidence="29">
    <location>
        <begin position="152"/>
        <end position="154"/>
    </location>
</feature>
<feature type="modified residue" description="Phosphoserine" evidence="24 25 26">
    <location sequence="Q13951-2">
        <position position="173"/>
    </location>
</feature>
<protein>
    <recommendedName>
        <fullName>Core-binding factor subunit beta</fullName>
        <shortName>CBF-beta</shortName>
    </recommendedName>
    <alternativeName>
        <fullName>Polyomavirus enhancer-binding protein 2 beta subunit</fullName>
        <shortName>PEA2-beta</shortName>
        <shortName>PEBP2-beta</shortName>
    </alternativeName>
    <alternativeName>
        <fullName>SL3-3 enhancer factor 1 subunit beta</fullName>
    </alternativeName>
    <alternativeName>
        <fullName>SL3/AKV core-binding factor beta subunit</fullName>
    </alternativeName>
</protein>
<sequence>MPRVVPDQRSKFENEEFFRKLSRECEIKYTGFRDRPHEERQARFQNACRDGRSEIAFVATGTNLSLQFFPASWQGEQRQTPSREYVDLEREAGKVYLKAPMILNGVCVIWKGWIDLQRLDGMGCLEFDEERAQQEDALAQQAFEEARRRTREFEDRDRSHREEMEVRVSQLLAVTGKKTTRP</sequence>
<evidence type="ECO:0000250" key="1">
    <source>
        <dbReference type="UniProtKB" id="Q08024"/>
    </source>
</evidence>
<evidence type="ECO:0000269" key="2">
    <source>
    </source>
</evidence>
<evidence type="ECO:0000269" key="3">
    <source>
    </source>
</evidence>
<evidence type="ECO:0000269" key="4">
    <source>
    </source>
</evidence>
<evidence type="ECO:0000269" key="5">
    <source>
    </source>
</evidence>
<evidence type="ECO:0000269" key="6">
    <source>
    </source>
</evidence>
<evidence type="ECO:0000269" key="7">
    <source>
    </source>
</evidence>
<evidence type="ECO:0000269" key="8">
    <source>
    </source>
</evidence>
<evidence type="ECO:0000269" key="9">
    <source>
    </source>
</evidence>
<evidence type="ECO:0000269" key="10">
    <source>
    </source>
</evidence>
<evidence type="ECO:0000269" key="11">
    <source>
    </source>
</evidence>
<evidence type="ECO:0000303" key="12">
    <source ref="1"/>
</evidence>
<evidence type="ECO:0000305" key="13"/>
<evidence type="ECO:0007744" key="14">
    <source>
        <dbReference type="PDB" id="4N9F"/>
    </source>
</evidence>
<evidence type="ECO:0007744" key="15">
    <source>
        <dbReference type="PDB" id="6NIL"/>
    </source>
</evidence>
<evidence type="ECO:0007744" key="16">
    <source>
        <dbReference type="PDB" id="8CX0"/>
    </source>
</evidence>
<evidence type="ECO:0007744" key="17">
    <source>
        <dbReference type="PDB" id="8CX1"/>
    </source>
</evidence>
<evidence type="ECO:0007744" key="18">
    <source>
        <dbReference type="PDB" id="8CX2"/>
    </source>
</evidence>
<evidence type="ECO:0007744" key="19">
    <source>
        <dbReference type="PDB" id="8E40"/>
    </source>
</evidence>
<evidence type="ECO:0007744" key="20">
    <source>
        <dbReference type="PDB" id="8FVI"/>
    </source>
</evidence>
<evidence type="ECO:0007744" key="21">
    <source>
        <dbReference type="PDB" id="8FVJ"/>
    </source>
</evidence>
<evidence type="ECO:0007744" key="22">
    <source>
        <dbReference type="PDB" id="8H0I"/>
    </source>
</evidence>
<evidence type="ECO:0007744" key="23">
    <source>
        <dbReference type="PDB" id="8J62"/>
    </source>
</evidence>
<evidence type="ECO:0007744" key="24">
    <source>
    </source>
</evidence>
<evidence type="ECO:0007744" key="25">
    <source>
    </source>
</evidence>
<evidence type="ECO:0007744" key="26">
    <source>
    </source>
</evidence>
<evidence type="ECO:0007829" key="27">
    <source>
        <dbReference type="PDB" id="1E50"/>
    </source>
</evidence>
<evidence type="ECO:0007829" key="28">
    <source>
        <dbReference type="PDB" id="1H9D"/>
    </source>
</evidence>
<evidence type="ECO:0007829" key="29">
    <source>
        <dbReference type="PDB" id="6P59"/>
    </source>
</evidence>
<evidence type="ECO:0007829" key="30">
    <source>
        <dbReference type="PDB" id="8CX0"/>
    </source>
</evidence>
<evidence type="ECO:0007829" key="31">
    <source>
        <dbReference type="PDB" id="8J62"/>
    </source>
</evidence>
<keyword id="KW-0002">3D-structure</keyword>
<keyword id="KW-0025">Alternative splicing</keyword>
<keyword id="KW-0160">Chromosomal rearrangement</keyword>
<keyword id="KW-0225">Disease variant</keyword>
<keyword id="KW-0242">Dwarfism</keyword>
<keyword id="KW-0539">Nucleus</keyword>
<keyword id="KW-0597">Phosphoprotein</keyword>
<keyword id="KW-1267">Proteomics identification</keyword>
<keyword id="KW-0656">Proto-oncogene</keyword>
<keyword id="KW-1185">Reference proteome</keyword>
<name>PEBB_HUMAN</name>
<reference key="1">
    <citation type="submission" date="2000-08" db="EMBL/GenBank/DDBJ databases">
        <authorList>
            <person name="Liu P.P."/>
        </authorList>
    </citation>
    <scope>NUCLEOTIDE SEQUENCE [MRNA] (ISOFORM 2)</scope>
</reference>
<reference key="2">
    <citation type="submission" date="2003-05" db="EMBL/GenBank/DDBJ databases">
        <title>Cloning of human full-length CDSs in BD Creator(TM) system donor vector.</title>
        <authorList>
            <person name="Kalnine N."/>
            <person name="Chen X."/>
            <person name="Rolfs A."/>
            <person name="Halleck A."/>
            <person name="Hines L."/>
            <person name="Eisenstein S."/>
            <person name="Koundinya M."/>
            <person name="Raphael J."/>
            <person name="Moreira D."/>
            <person name="Kelley T."/>
            <person name="LaBaer J."/>
            <person name="Lin Y."/>
            <person name="Phelan M."/>
            <person name="Farmer A."/>
        </authorList>
    </citation>
    <scope>NUCLEOTIDE SEQUENCE [LARGE SCALE MRNA] (ISOFORM 1)</scope>
</reference>
<reference key="3">
    <citation type="journal article" date="2004" name="Nat. Genet.">
        <title>Complete sequencing and characterization of 21,243 full-length human cDNAs.</title>
        <authorList>
            <person name="Ota T."/>
            <person name="Suzuki Y."/>
            <person name="Nishikawa T."/>
            <person name="Otsuki T."/>
            <person name="Sugiyama T."/>
            <person name="Irie R."/>
            <person name="Wakamatsu A."/>
            <person name="Hayashi K."/>
            <person name="Sato H."/>
            <person name="Nagai K."/>
            <person name="Kimura K."/>
            <person name="Makita H."/>
            <person name="Sekine M."/>
            <person name="Obayashi M."/>
            <person name="Nishi T."/>
            <person name="Shibahara T."/>
            <person name="Tanaka T."/>
            <person name="Ishii S."/>
            <person name="Yamamoto J."/>
            <person name="Saito K."/>
            <person name="Kawai Y."/>
            <person name="Isono Y."/>
            <person name="Nakamura Y."/>
            <person name="Nagahari K."/>
            <person name="Murakami K."/>
            <person name="Yasuda T."/>
            <person name="Iwayanagi T."/>
            <person name="Wagatsuma M."/>
            <person name="Shiratori A."/>
            <person name="Sudo H."/>
            <person name="Hosoiri T."/>
            <person name="Kaku Y."/>
            <person name="Kodaira H."/>
            <person name="Kondo H."/>
            <person name="Sugawara M."/>
            <person name="Takahashi M."/>
            <person name="Kanda K."/>
            <person name="Yokoi T."/>
            <person name="Furuya T."/>
            <person name="Kikkawa E."/>
            <person name="Omura Y."/>
            <person name="Abe K."/>
            <person name="Kamihara K."/>
            <person name="Katsuta N."/>
            <person name="Sato K."/>
            <person name="Tanikawa M."/>
            <person name="Yamazaki M."/>
            <person name="Ninomiya K."/>
            <person name="Ishibashi T."/>
            <person name="Yamashita H."/>
            <person name="Murakawa K."/>
            <person name="Fujimori K."/>
            <person name="Tanai H."/>
            <person name="Kimata M."/>
            <person name="Watanabe M."/>
            <person name="Hiraoka S."/>
            <person name="Chiba Y."/>
            <person name="Ishida S."/>
            <person name="Ono Y."/>
            <person name="Takiguchi S."/>
            <person name="Watanabe S."/>
            <person name="Yosida M."/>
            <person name="Hotuta T."/>
            <person name="Kusano J."/>
            <person name="Kanehori K."/>
            <person name="Takahashi-Fujii A."/>
            <person name="Hara H."/>
            <person name="Tanase T.-O."/>
            <person name="Nomura Y."/>
            <person name="Togiya S."/>
            <person name="Komai F."/>
            <person name="Hara R."/>
            <person name="Takeuchi K."/>
            <person name="Arita M."/>
            <person name="Imose N."/>
            <person name="Musashino K."/>
            <person name="Yuuki H."/>
            <person name="Oshima A."/>
            <person name="Sasaki N."/>
            <person name="Aotsuka S."/>
            <person name="Yoshikawa Y."/>
            <person name="Matsunawa H."/>
            <person name="Ichihara T."/>
            <person name="Shiohata N."/>
            <person name="Sano S."/>
            <person name="Moriya S."/>
            <person name="Momiyama H."/>
            <person name="Satoh N."/>
            <person name="Takami S."/>
            <person name="Terashima Y."/>
            <person name="Suzuki O."/>
            <person name="Nakagawa S."/>
            <person name="Senoh A."/>
            <person name="Mizoguchi H."/>
            <person name="Goto Y."/>
            <person name="Shimizu F."/>
            <person name="Wakebe H."/>
            <person name="Hishigaki H."/>
            <person name="Watanabe T."/>
            <person name="Sugiyama A."/>
            <person name="Takemoto M."/>
            <person name="Kawakami B."/>
            <person name="Yamazaki M."/>
            <person name="Watanabe K."/>
            <person name="Kumagai A."/>
            <person name="Itakura S."/>
            <person name="Fukuzumi Y."/>
            <person name="Fujimori Y."/>
            <person name="Komiyama M."/>
            <person name="Tashiro H."/>
            <person name="Tanigami A."/>
            <person name="Fujiwara T."/>
            <person name="Ono T."/>
            <person name="Yamada K."/>
            <person name="Fujii Y."/>
            <person name="Ozaki K."/>
            <person name="Hirao M."/>
            <person name="Ohmori Y."/>
            <person name="Kawabata A."/>
            <person name="Hikiji T."/>
            <person name="Kobatake N."/>
            <person name="Inagaki H."/>
            <person name="Ikema Y."/>
            <person name="Okamoto S."/>
            <person name="Okitani R."/>
            <person name="Kawakami T."/>
            <person name="Noguchi S."/>
            <person name="Itoh T."/>
            <person name="Shigeta K."/>
            <person name="Senba T."/>
            <person name="Matsumura K."/>
            <person name="Nakajima Y."/>
            <person name="Mizuno T."/>
            <person name="Morinaga M."/>
            <person name="Sasaki M."/>
            <person name="Togashi T."/>
            <person name="Oyama M."/>
            <person name="Hata H."/>
            <person name="Watanabe M."/>
            <person name="Komatsu T."/>
            <person name="Mizushima-Sugano J."/>
            <person name="Satoh T."/>
            <person name="Shirai Y."/>
            <person name="Takahashi Y."/>
            <person name="Nakagawa K."/>
            <person name="Okumura K."/>
            <person name="Nagase T."/>
            <person name="Nomura N."/>
            <person name="Kikuchi H."/>
            <person name="Masuho Y."/>
            <person name="Yamashita R."/>
            <person name="Nakai K."/>
            <person name="Yada T."/>
            <person name="Nakamura Y."/>
            <person name="Ohara O."/>
            <person name="Isogai T."/>
            <person name="Sugano S."/>
        </authorList>
    </citation>
    <scope>NUCLEOTIDE SEQUENCE [LARGE SCALE MRNA] (ISOFORM 1)</scope>
    <source>
        <tissue>Brain</tissue>
    </source>
</reference>
<reference key="4">
    <citation type="submission" date="2005-07" db="EMBL/GenBank/DDBJ databases">
        <authorList>
            <person name="Mural R.J."/>
            <person name="Istrail S."/>
            <person name="Sutton G.G."/>
            <person name="Florea L."/>
            <person name="Halpern A.L."/>
            <person name="Mobarry C.M."/>
            <person name="Lippert R."/>
            <person name="Walenz B."/>
            <person name="Shatkay H."/>
            <person name="Dew I."/>
            <person name="Miller J.R."/>
            <person name="Flanigan M.J."/>
            <person name="Edwards N.J."/>
            <person name="Bolanos R."/>
            <person name="Fasulo D."/>
            <person name="Halldorsson B.V."/>
            <person name="Hannenhalli S."/>
            <person name="Turner R."/>
            <person name="Yooseph S."/>
            <person name="Lu F."/>
            <person name="Nusskern D.R."/>
            <person name="Shue B.C."/>
            <person name="Zheng X.H."/>
            <person name="Zhong F."/>
            <person name="Delcher A.L."/>
            <person name="Huson D.H."/>
            <person name="Kravitz S.A."/>
            <person name="Mouchard L."/>
            <person name="Reinert K."/>
            <person name="Remington K.A."/>
            <person name="Clark A.G."/>
            <person name="Waterman M.S."/>
            <person name="Eichler E.E."/>
            <person name="Adams M.D."/>
            <person name="Hunkapiller M.W."/>
            <person name="Myers E.W."/>
            <person name="Venter J.C."/>
        </authorList>
    </citation>
    <scope>NUCLEOTIDE SEQUENCE [LARGE SCALE GENOMIC DNA]</scope>
</reference>
<reference key="5">
    <citation type="journal article" date="2004" name="Genome Res.">
        <title>The status, quality, and expansion of the NIH full-length cDNA project: the Mammalian Gene Collection (MGC).</title>
        <authorList>
            <consortium name="The MGC Project Team"/>
        </authorList>
    </citation>
    <scope>NUCLEOTIDE SEQUENCE [LARGE SCALE MRNA] (ISOFORM 1)</scope>
    <source>
        <tissue>Eye</tissue>
    </source>
</reference>
<reference key="6">
    <citation type="journal article" date="1993" name="Science">
        <title>Fusion between transcription factor CBF beta/PEBP2 beta and a myosin heavy chain in acute myeloid leukemia.</title>
        <authorList>
            <person name="Liu P."/>
            <person name="Tarle S.A."/>
            <person name="Hajra A."/>
            <person name="Claxton D.F."/>
            <person name="Marlton P."/>
            <person name="Freedman M."/>
            <person name="Siciliano M.J."/>
            <person name="Collins F.S."/>
        </authorList>
    </citation>
    <scope>NUCLEOTIDE SEQUENCE [MRNA] OF 8-182 (ISOFORM 1)</scope>
    <scope>CHROMOSOMAL INVERSION</scope>
    <source>
        <tissue>Brain</tissue>
    </source>
</reference>
<reference key="7">
    <citation type="journal article" date="1995" name="Genomics">
        <title>Structure of the leukemia-associated human CBFB gene.</title>
        <authorList>
            <person name="Hajra A."/>
            <person name="Collins F.S."/>
        </authorList>
    </citation>
    <scope>RETRACTED PAPER</scope>
</reference>
<reference key="8">
    <citation type="journal article" date="1996" name="Genomics">
        <authorList>
            <person name="Hajra A."/>
            <person name="Collins F.S."/>
        </authorList>
    </citation>
    <scope>RETRACTION NOTICE OF PUBMED:7607682</scope>
</reference>
<reference key="9">
    <citation type="journal article" date="2006" name="Cell">
        <title>Global, in vivo, and site-specific phosphorylation dynamics in signaling networks.</title>
        <authorList>
            <person name="Olsen J.V."/>
            <person name="Blagoev B."/>
            <person name="Gnad F."/>
            <person name="Macek B."/>
            <person name="Kumar C."/>
            <person name="Mortensen P."/>
            <person name="Mann M."/>
        </authorList>
    </citation>
    <scope>PHOSPHORYLATION [LARGE SCALE ANALYSIS] AT SER-173 (ISOFORM 2)</scope>
    <scope>IDENTIFICATION BY MASS SPECTROMETRY [LARGE SCALE ANALYSIS]</scope>
    <source>
        <tissue>Cervix carcinoma</tissue>
    </source>
</reference>
<reference key="10">
    <citation type="journal article" date="2008" name="Proc. Natl. Acad. Sci. U.S.A.">
        <title>A quantitative atlas of mitotic phosphorylation.</title>
        <authorList>
            <person name="Dephoure N."/>
            <person name="Zhou C."/>
            <person name="Villen J."/>
            <person name="Beausoleil S.A."/>
            <person name="Bakalarski C.E."/>
            <person name="Elledge S.J."/>
            <person name="Gygi S.P."/>
        </authorList>
    </citation>
    <scope>PHOSPHORYLATION [LARGE SCALE ANALYSIS] AT SER-173 (ISOFORM 2)</scope>
    <scope>IDENTIFICATION BY MASS SPECTROMETRY [LARGE SCALE ANALYSIS]</scope>
    <source>
        <tissue>Cervix carcinoma</tissue>
    </source>
</reference>
<reference key="11">
    <citation type="journal article" date="2010" name="Sci. Signal.">
        <title>Quantitative phosphoproteomics reveals widespread full phosphorylation site occupancy during mitosis.</title>
        <authorList>
            <person name="Olsen J.V."/>
            <person name="Vermeulen M."/>
            <person name="Santamaria A."/>
            <person name="Kumar C."/>
            <person name="Miller M.L."/>
            <person name="Jensen L.J."/>
            <person name="Gnad F."/>
            <person name="Cox J."/>
            <person name="Jensen T.S."/>
            <person name="Nigg E.A."/>
            <person name="Brunak S."/>
            <person name="Mann M."/>
        </authorList>
    </citation>
    <scope>PHOSPHORYLATION [LARGE SCALE ANALYSIS] AT SER-173 (ISOFORM 2)</scope>
    <scope>IDENTIFICATION BY MASS SPECTROMETRY [LARGE SCALE ANALYSIS]</scope>
    <source>
        <tissue>Cervix carcinoma</tissue>
    </source>
</reference>
<reference key="12">
    <citation type="journal article" date="2011" name="BMC Syst. Biol.">
        <title>Initial characterization of the human central proteome.</title>
        <authorList>
            <person name="Burkard T.R."/>
            <person name="Planyavsky M."/>
            <person name="Kaupe I."/>
            <person name="Breitwieser F.P."/>
            <person name="Buerckstuemmer T."/>
            <person name="Bennett K.L."/>
            <person name="Superti-Furga G."/>
            <person name="Colinge J."/>
        </authorList>
    </citation>
    <scope>IDENTIFICATION BY MASS SPECTROMETRY [LARGE SCALE ANALYSIS]</scope>
</reference>
<reference key="13">
    <citation type="journal article" date="2011" name="Nature">
        <title>Vif hijacks CBF-beta to degrade APOBEC3G and promote HIV-1 infection.</title>
        <authorList>
            <person name="Jaeger S."/>
            <person name="Kim D.Y."/>
            <person name="Hultquist J.F."/>
            <person name="Shindo K."/>
            <person name="LaRue R.S."/>
            <person name="Kwon E."/>
            <person name="Li M."/>
            <person name="Anderson B.D."/>
            <person name="Yen L."/>
            <person name="Stanley D."/>
            <person name="Mahon C."/>
            <person name="Kane J."/>
            <person name="Franks-Skiba K."/>
            <person name="Cimermancic P."/>
            <person name="Burlingame A."/>
            <person name="Sali A."/>
            <person name="Craik C.S."/>
            <person name="Harris R.S."/>
            <person name="Gross J.D."/>
            <person name="Krogan N.J."/>
        </authorList>
    </citation>
    <scope>FUNCTION (MICROBIAL INFECTION)</scope>
    <scope>IDENTIFICATION IN AN ECS COMPLEX (MICROBIAL INFECTION)</scope>
</reference>
<reference key="14">
    <citation type="journal article" date="2000" name="EMBO J.">
        <title>Structural basis for the heterodimeric interaction between the acute leukaemia-associated transcription factors AML1 and CBFbeta.</title>
        <authorList>
            <person name="Warren A.J."/>
            <person name="Bravo J."/>
            <person name="Williams R.L."/>
            <person name="Rabbitts T.H."/>
        </authorList>
    </citation>
    <scope>X-RAY CRYSTALLOGRAPHY (2.6 ANGSTROMS) OF 2-135 IN COMPLEX WITH RUNX1</scope>
</reference>
<reference key="15">
    <citation type="journal article" date="2001" name="Nat. Struct. Biol.">
        <title>The leukemia-associated AML1 (Runx1) -- CBF beta complex functions as a DNA-induced molecular clamp.</title>
        <authorList>
            <person name="Bravo J."/>
            <person name="Li Z."/>
            <person name="Speck N.A."/>
            <person name="Warren A.J."/>
        </authorList>
    </citation>
    <scope>X-RAY CRYSTALLOGRAPHY (2.6 ANGSTROMS) OF 2-135 IN COMPLEX WITH RUNX1 AND DNA</scope>
</reference>
<reference key="16">
    <citation type="journal article" date="1999" name="Nat. Struct. Biol.">
        <title>Molecular insights into PEBP2/CBF beta-SMMHC associated acute leukemia revealed from the structure of PEBP2/CBF beta.</title>
        <authorList>
            <person name="Goger M."/>
            <person name="Gupta V."/>
            <person name="Kim W.Y."/>
            <person name="Shigesada K."/>
            <person name="Ito Y."/>
            <person name="Werner M.H."/>
        </authorList>
    </citation>
    <scope>STRUCTURE BY NMR OF 4-141</scope>
</reference>
<reference evidence="14" key="17">
    <citation type="journal article" date="2014" name="Nature">
        <title>Structural basis for hijacking CBF-beta and CUL5 E3 ligase complex by HIV-1 Vif.</title>
        <authorList>
            <person name="Guo Y."/>
            <person name="Dong L."/>
            <person name="Qiu X."/>
            <person name="Wang Y."/>
            <person name="Zhang B."/>
            <person name="Liu H."/>
            <person name="Yu Y."/>
            <person name="Zang Y."/>
            <person name="Yang M."/>
            <person name="Huang Z."/>
        </authorList>
    </citation>
    <scope>X-RAY CRYSTALLOGRAPHY (3.30 ANGSTROMS) OF 1-170 IN COMPLEX WITH HIV-1 VIF; CUL5; ELOB AND ELOC</scope>
    <scope>IDENTIFICATION IN AN ECS COMPLEX (MICROBIAL INFECTION)</scope>
</reference>
<reference evidence="15" key="18">
    <citation type="journal article" date="2019" name="Nat. Struct. Mol. Biol.">
        <title>Structural basis of antagonism of human APOBEC3F by HIV-1 Vif.</title>
        <authorList>
            <person name="Hu Y."/>
            <person name="Desimmie B.A."/>
            <person name="Nguyen H.C."/>
            <person name="Ziegler S.J."/>
            <person name="Cheng T.C."/>
            <person name="Chen J."/>
            <person name="Wang J."/>
            <person name="Wang H."/>
            <person name="Zhang K."/>
            <person name="Pathak V.K."/>
            <person name="Xiong Y."/>
        </authorList>
    </citation>
    <scope>STRUCTURE BY ELECTRON MICROSCOPY (3.90 ANGSTROMS) OF 1-151 IN COMPLEX WITH APOBEC3F AND HIV-1 VIF</scope>
    <scope>FUNCTION (MICROBIAL INFECTION)</scope>
    <scope>IDENTIFICATION IN AN ECS COMPLEX (MICROBIAL INFECTION)</scope>
    <scope>MUTAGENESIS OF 35-ARG--ARG-43 AND GLU-54</scope>
</reference>
<reference evidence="16 17 18" key="19">
    <citation type="journal article" date="2023" name="Nature">
        <title>The structural basis for HIV-1 Vif antagonism of human APOBEC3G.</title>
        <authorList>
            <person name="Li Y.L."/>
            <person name="Langley C.A."/>
            <person name="Azumaya C.M."/>
            <person name="Echeverria I."/>
            <person name="Chesarino N.M."/>
            <person name="Emerman M."/>
            <person name="Cheng Y."/>
            <person name="Gross J.D."/>
        </authorList>
    </citation>
    <scope>STRUCTURE BY ELECTRON MICROSCOPY (2.70 ANGSTROMS) IN COMPLEX WITH APOBEC3G; CUL5; ELOB; ELOC AND HIV-1 VIF</scope>
    <scope>FUNCTION (MICROBIAL INFECTION)</scope>
    <scope>IDENTIFICATION IN AN ECS COMPLEX (MICROBIAL INFECTION)</scope>
</reference>
<reference evidence="20 21" key="20">
    <citation type="journal article" date="2023" name="Nat. Commun.">
        <title>Structural basis of HIV-1 Vif-mediated E3 ligase targeting of host APOBEC3H.</title>
        <authorList>
            <person name="Ito F."/>
            <person name="Alvarez-Cabrera A.L."/>
            <person name="Kim K."/>
            <person name="Zhou Z.H."/>
            <person name="Chen X.S."/>
        </authorList>
    </citation>
    <scope>STRUCTURE BY ELECTRON MICROSCOPY (3.24 ANGSTROMS) OF 1-157 IN COMPLEX WITH APOBEC3H; CUL5; ELOB; ELOC AND HIV-1 VIF</scope>
    <scope>FUNCTION (MICROBIAL INFECTION)</scope>
    <scope>IDENTIFICATION IN AN ECS COMPLEX (MICROBIAL INFECTION)</scope>
</reference>
<reference evidence="22 23" key="21">
    <citation type="journal article" date="2023" name="Nat. Commun.">
        <title>Structural insights into RNA bridging between HIV-1 Vif and antiviral factor APOBEC3G.</title>
        <authorList>
            <person name="Kouno T."/>
            <person name="Shibata S."/>
            <person name="Shigematsu M."/>
            <person name="Hyun J."/>
            <person name="Kim T.G."/>
            <person name="Matsuo H."/>
            <person name="Wolf M."/>
        </authorList>
    </citation>
    <scope>STRUCTURE BY ELECTRON MICROSCOPY (2.50 ANGSTROMS) OF 1-156 IN COMPLEX WITH APOBEC3G AND HIV-1 VIF</scope>
    <scope>FUNCTION (MICROBIAL INFECTION)</scope>
    <scope>IDENTIFICATION IN AN ECS COMPLEX (MICROBIAL INFECTION)</scope>
</reference>
<reference evidence="19" key="22">
    <citation type="journal article" date="2023" name="Sci. Adv.">
        <title>Structural basis for HIV-1 antagonism of host APOBEC3G via Cullin E3 ligase.</title>
        <authorList>
            <person name="Ito F."/>
            <person name="Alvarez-Cabrera A.L."/>
            <person name="Liu S."/>
            <person name="Yang H."/>
            <person name="Shiriaeva A."/>
            <person name="Zhou Z.H."/>
            <person name="Chen X.S."/>
        </authorList>
    </citation>
    <scope>STRUCTURE BY ELECTRON MICROSCOPY (3.57 ANGSTROMS) OF 1-157 IN COMPLEX WITH APOBEC3G AND HIV-1 VIF</scope>
    <scope>FUNCTION (MICROBIAL INFECTION)</scope>
    <scope>IDENTIFICATION IN AN ECS COMPLEX (MICROBIAL INFECTION)</scope>
</reference>
<reference key="23">
    <citation type="journal article" date="2006" name="Science">
        <title>The consensus coding sequences of human breast and colorectal cancers.</title>
        <authorList>
            <person name="Sjoeblom T."/>
            <person name="Jones S."/>
            <person name="Wood L.D."/>
            <person name="Parsons D.W."/>
            <person name="Lin J."/>
            <person name="Barber T.D."/>
            <person name="Mandelker D."/>
            <person name="Leary R.J."/>
            <person name="Ptak J."/>
            <person name="Silliman N."/>
            <person name="Szabo S."/>
            <person name="Buckhaults P."/>
            <person name="Farrell C."/>
            <person name="Meeh P."/>
            <person name="Markowitz S.D."/>
            <person name="Willis J."/>
            <person name="Dawson D."/>
            <person name="Willson J.K.V."/>
            <person name="Gazdar A.F."/>
            <person name="Hartigan J."/>
            <person name="Wu L."/>
            <person name="Liu C."/>
            <person name="Parmigiani G."/>
            <person name="Park B.H."/>
            <person name="Bachman K.E."/>
            <person name="Papadopoulos N."/>
            <person name="Vogelstein B."/>
            <person name="Kinzler K.W."/>
            <person name="Velculescu V.E."/>
        </authorList>
    </citation>
    <scope>VARIANT [LARGE SCALE ANALYSIS] ALA-100</scope>
</reference>
<reference key="24">
    <citation type="journal article" date="2022" name="J. Med. Genet.">
        <title>Heterozygous pathogenic variants involving CBFB cause a new skeletal disorder resembling cleidocranial dysplasia.</title>
        <authorList>
            <person name="Beyltjens T."/>
            <person name="Boudin E."/>
            <person name="Revencu N."/>
            <person name="Boeckx N."/>
            <person name="Bertrand M."/>
            <person name="Schuetz L."/>
            <person name="Haack T.B."/>
            <person name="Weber A."/>
            <person name="Biliouri E."/>
            <person name="Vinksel M."/>
            <person name="Zagozen A."/>
            <person name="Peterlin B."/>
            <person name="Pai S."/>
            <person name="Telegrafi A."/>
            <person name="Henderson L.B."/>
            <person name="Ells C."/>
            <person name="Turner L."/>
            <person name="Wuyts W."/>
            <person name="Van Hul W."/>
            <person name="Hendrickx G."/>
            <person name="Mortier G.R."/>
        </authorList>
    </citation>
    <scope>VARIANT CLCD2 83-ARG--PRO-182 DEL</scope>
    <scope>INVOLVEMENT IN CLCD2</scope>
</reference>
<accession>Q13951</accession>
<accession>A8K347</accession>
<accession>Q13124</accession>
<accession>Q9HCT2</accession>
<gene>
    <name type="primary">CBFB</name>
</gene>
<organism>
    <name type="scientific">Homo sapiens</name>
    <name type="common">Human</name>
    <dbReference type="NCBI Taxonomy" id="9606"/>
    <lineage>
        <taxon>Eukaryota</taxon>
        <taxon>Metazoa</taxon>
        <taxon>Chordata</taxon>
        <taxon>Craniata</taxon>
        <taxon>Vertebrata</taxon>
        <taxon>Euteleostomi</taxon>
        <taxon>Mammalia</taxon>
        <taxon>Eutheria</taxon>
        <taxon>Euarchontoglires</taxon>
        <taxon>Primates</taxon>
        <taxon>Haplorrhini</taxon>
        <taxon>Catarrhini</taxon>
        <taxon>Hominidae</taxon>
        <taxon>Homo</taxon>
    </lineage>
</organism>
<dbReference type="EMBL" id="AF294326">
    <property type="protein sequence ID" value="AAG01553.1"/>
    <property type="molecule type" value="mRNA"/>
</dbReference>
<dbReference type="EMBL" id="BT006862">
    <property type="protein sequence ID" value="AAP35508.1"/>
    <property type="molecule type" value="mRNA"/>
</dbReference>
<dbReference type="EMBL" id="AK290462">
    <property type="protein sequence ID" value="BAF83151.1"/>
    <property type="molecule type" value="mRNA"/>
</dbReference>
<dbReference type="EMBL" id="CH471092">
    <property type="protein sequence ID" value="EAW83067.1"/>
    <property type="molecule type" value="Genomic_DNA"/>
</dbReference>
<dbReference type="EMBL" id="CH471092">
    <property type="protein sequence ID" value="EAW83068.1"/>
    <property type="molecule type" value="Genomic_DNA"/>
</dbReference>
<dbReference type="EMBL" id="BC018509">
    <property type="protein sequence ID" value="AAH18509.1"/>
    <property type="molecule type" value="mRNA"/>
</dbReference>
<dbReference type="EMBL" id="L20298">
    <property type="protein sequence ID" value="AAA02868.1"/>
    <property type="molecule type" value="mRNA"/>
</dbReference>
<dbReference type="CCDS" id="CCDS10827.1">
    <molecule id="Q13951-1"/>
</dbReference>
<dbReference type="CCDS" id="CCDS45508.1">
    <molecule id="Q13951-2"/>
</dbReference>
<dbReference type="PIR" id="A56840">
    <property type="entry name" value="A56840"/>
</dbReference>
<dbReference type="PIR" id="I59579">
    <property type="entry name" value="I59579"/>
</dbReference>
<dbReference type="RefSeq" id="NP_001746.1">
    <molecule id="Q13951-1"/>
    <property type="nucleotide sequence ID" value="NM_001755.3"/>
</dbReference>
<dbReference type="RefSeq" id="NP_074036.1">
    <molecule id="Q13951-2"/>
    <property type="nucleotide sequence ID" value="NM_022845.3"/>
</dbReference>
<dbReference type="PDB" id="1CL3">
    <property type="method" value="NMR"/>
    <property type="chains" value="A=4-141"/>
</dbReference>
<dbReference type="PDB" id="1E50">
    <property type="method" value="X-ray"/>
    <property type="resolution" value="2.60 A"/>
    <property type="chains" value="B/D/F/H=2-135"/>
</dbReference>
<dbReference type="PDB" id="1H9D">
    <property type="method" value="X-ray"/>
    <property type="resolution" value="2.60 A"/>
    <property type="chains" value="B/D=2-135"/>
</dbReference>
<dbReference type="PDB" id="4N9F">
    <property type="method" value="X-ray"/>
    <property type="resolution" value="3.30 A"/>
    <property type="chains" value="0/6/F/L/N/R/a/c/i/k/o/u=1-170"/>
</dbReference>
<dbReference type="PDB" id="6NIL">
    <property type="method" value="EM"/>
    <property type="resolution" value="3.90 A"/>
    <property type="chains" value="B/E/H/K=1-151"/>
</dbReference>
<dbReference type="PDB" id="6P59">
    <property type="method" value="X-ray"/>
    <property type="resolution" value="2.94 A"/>
    <property type="chains" value="A/C=1-165"/>
</dbReference>
<dbReference type="PDB" id="6VGD">
    <property type="method" value="X-ray"/>
    <property type="resolution" value="4.20 A"/>
    <property type="chains" value="G=1-142"/>
</dbReference>
<dbReference type="PDB" id="6VGE">
    <property type="method" value="X-ray"/>
    <property type="resolution" value="4.25 A"/>
    <property type="chains" value="G=1-142"/>
</dbReference>
<dbReference type="PDB" id="6VGG">
    <property type="method" value="X-ray"/>
    <property type="resolution" value="4.31 A"/>
    <property type="chains" value="G=1-142"/>
</dbReference>
<dbReference type="PDB" id="8CX0">
    <property type="method" value="EM"/>
    <property type="resolution" value="2.70 A"/>
    <property type="chains" value="C=1-182"/>
</dbReference>
<dbReference type="PDB" id="8CX1">
    <property type="method" value="EM"/>
    <property type="resolution" value="3.30 A"/>
    <property type="chains" value="C/H=1-182"/>
</dbReference>
<dbReference type="PDB" id="8CX2">
    <property type="method" value="EM"/>
    <property type="resolution" value="3.20 A"/>
    <property type="chains" value="C/H=1-182"/>
</dbReference>
<dbReference type="PDB" id="8E40">
    <property type="method" value="EM"/>
    <property type="resolution" value="3.57 A"/>
    <property type="chains" value="C=1-157"/>
</dbReference>
<dbReference type="PDB" id="8FVI">
    <property type="method" value="EM"/>
    <property type="resolution" value="3.24 A"/>
    <property type="chains" value="0=1-157"/>
</dbReference>
<dbReference type="PDB" id="8FVJ">
    <property type="method" value="EM"/>
    <property type="resolution" value="3.54 A"/>
    <property type="chains" value="0/5=1-157"/>
</dbReference>
<dbReference type="PDB" id="8H0I">
    <property type="method" value="EM"/>
    <property type="resolution" value="2.80 A"/>
    <property type="chains" value="D/F/H/J=1-156"/>
</dbReference>
<dbReference type="PDB" id="8J62">
    <property type="method" value="EM"/>
    <property type="resolution" value="2.50 A"/>
    <property type="chains" value="D/F/H/J=1-156"/>
</dbReference>
<dbReference type="PDB" id="8SZK">
    <property type="method" value="EM"/>
    <property type="resolution" value="3.58 A"/>
    <property type="chains" value="C=1-170"/>
</dbReference>
<dbReference type="PDBsum" id="1CL3"/>
<dbReference type="PDBsum" id="1E50"/>
<dbReference type="PDBsum" id="1H9D"/>
<dbReference type="PDBsum" id="4N9F"/>
<dbReference type="PDBsum" id="6NIL"/>
<dbReference type="PDBsum" id="6P59"/>
<dbReference type="PDBsum" id="6VGD"/>
<dbReference type="PDBsum" id="6VGE"/>
<dbReference type="PDBsum" id="6VGG"/>
<dbReference type="PDBsum" id="8CX0"/>
<dbReference type="PDBsum" id="8CX1"/>
<dbReference type="PDBsum" id="8CX2"/>
<dbReference type="PDBsum" id="8E40"/>
<dbReference type="PDBsum" id="8FVI"/>
<dbReference type="PDBsum" id="8FVJ"/>
<dbReference type="PDBsum" id="8H0I"/>
<dbReference type="PDBsum" id="8J62"/>
<dbReference type="PDBsum" id="8SZK"/>
<dbReference type="BMRB" id="Q13951"/>
<dbReference type="EMDB" id="EMD-27032"/>
<dbReference type="EMDB" id="EMD-27033"/>
<dbReference type="EMDB" id="EMD-27034"/>
<dbReference type="EMDB" id="EMD-27875"/>
<dbReference type="EMDB" id="EMD-27885"/>
<dbReference type="EMDB" id="EMD-29488"/>
<dbReference type="EMDB" id="EMD-29489"/>
<dbReference type="EMDB" id="EMD-29490"/>
<dbReference type="EMDB" id="EMD-34412"/>
<dbReference type="EMDB" id="EMD-35999"/>
<dbReference type="EMDB" id="EMD-40919"/>
<dbReference type="EMDB" id="EMD-9380"/>
<dbReference type="SMR" id="Q13951"/>
<dbReference type="BioGRID" id="107313">
    <property type="interactions" value="105"/>
</dbReference>
<dbReference type="CORUM" id="Q13951"/>
<dbReference type="DIP" id="DIP-36772N"/>
<dbReference type="FunCoup" id="Q13951">
    <property type="interactions" value="2318"/>
</dbReference>
<dbReference type="IntAct" id="Q13951">
    <property type="interactions" value="58"/>
</dbReference>
<dbReference type="MINT" id="Q13951"/>
<dbReference type="STRING" id="9606.ENSP00000415151"/>
<dbReference type="BindingDB" id="Q13951"/>
<dbReference type="ChEMBL" id="CHEMBL1615386"/>
<dbReference type="MoonProt" id="Q13951"/>
<dbReference type="GlyGen" id="Q13951">
    <property type="glycosylation" value="1 site, 1 O-linked glycan (1 site)"/>
</dbReference>
<dbReference type="iPTMnet" id="Q13951"/>
<dbReference type="MetOSite" id="Q13951"/>
<dbReference type="PhosphoSitePlus" id="Q13951"/>
<dbReference type="BioMuta" id="CBFB"/>
<dbReference type="DMDM" id="2498753"/>
<dbReference type="jPOST" id="Q13951"/>
<dbReference type="MassIVE" id="Q13951"/>
<dbReference type="PaxDb" id="9606-ENSP00000415151"/>
<dbReference type="PeptideAtlas" id="Q13951"/>
<dbReference type="ProteomicsDB" id="59770">
    <molecule id="Q13951-1"/>
</dbReference>
<dbReference type="ProteomicsDB" id="59771">
    <molecule id="Q13951-2"/>
</dbReference>
<dbReference type="Pumba" id="Q13951"/>
<dbReference type="Antibodypedia" id="15619">
    <property type="antibodies" value="430 antibodies from 39 providers"/>
</dbReference>
<dbReference type="DNASU" id="865"/>
<dbReference type="Ensembl" id="ENST00000290858.11">
    <molecule id="Q13951-1"/>
    <property type="protein sequence ID" value="ENSP00000290858.6"/>
    <property type="gene ID" value="ENSG00000067955.15"/>
</dbReference>
<dbReference type="Ensembl" id="ENST00000412916.7">
    <molecule id="Q13951-2"/>
    <property type="protein sequence ID" value="ENSP00000415151.2"/>
    <property type="gene ID" value="ENSG00000067955.15"/>
</dbReference>
<dbReference type="GeneID" id="865"/>
<dbReference type="KEGG" id="hsa:865"/>
<dbReference type="MANE-Select" id="ENST00000412916.7">
    <molecule id="Q13951-2"/>
    <property type="protein sequence ID" value="ENSP00000415151.2"/>
    <property type="RefSeq nucleotide sequence ID" value="NM_022845.3"/>
    <property type="RefSeq protein sequence ID" value="NP_074036.1"/>
</dbReference>
<dbReference type="UCSC" id="uc002era.4">
    <molecule id="Q13951-1"/>
    <property type="organism name" value="human"/>
</dbReference>
<dbReference type="AGR" id="HGNC:1539"/>
<dbReference type="CTD" id="865"/>
<dbReference type="DisGeNET" id="865"/>
<dbReference type="GeneCards" id="CBFB"/>
<dbReference type="HGNC" id="HGNC:1539">
    <property type="gene designation" value="CBFB"/>
</dbReference>
<dbReference type="HPA" id="ENSG00000067955">
    <property type="expression patterns" value="Low tissue specificity"/>
</dbReference>
<dbReference type="MalaCards" id="CBFB"/>
<dbReference type="MIM" id="121360">
    <property type="type" value="gene"/>
</dbReference>
<dbReference type="MIM" id="620099">
    <property type="type" value="phenotype"/>
</dbReference>
<dbReference type="neXtProt" id="NX_Q13951"/>
<dbReference type="OpenTargets" id="ENSG00000067955"/>
<dbReference type="Orphanet" id="98829">
    <property type="disease" value="Acute myeloid leukemia with abnormal bone marrow eosinophils inv(16)(p13q22) or t(16;16)(p13;q22)"/>
</dbReference>
<dbReference type="PharmGKB" id="PA26114"/>
<dbReference type="VEuPathDB" id="HostDB:ENSG00000067955"/>
<dbReference type="eggNOG" id="KOG4785">
    <property type="taxonomic scope" value="Eukaryota"/>
</dbReference>
<dbReference type="GeneTree" id="ENSGT00390000018132"/>
<dbReference type="HOGENOM" id="CLU_074992_1_0_1"/>
<dbReference type="InParanoid" id="Q13951"/>
<dbReference type="OMA" id="YAEISMV"/>
<dbReference type="OrthoDB" id="10026505at2759"/>
<dbReference type="PAN-GO" id="Q13951">
    <property type="GO annotations" value="4 GO annotations based on evolutionary models"/>
</dbReference>
<dbReference type="PhylomeDB" id="Q13951"/>
<dbReference type="TreeFam" id="TF314675"/>
<dbReference type="PathwayCommons" id="Q13951"/>
<dbReference type="Reactome" id="R-HSA-8877330">
    <property type="pathway name" value="RUNX1 and FOXP3 control the development of regulatory T lymphocytes (Tregs)"/>
</dbReference>
<dbReference type="Reactome" id="R-HSA-8878166">
    <property type="pathway name" value="Transcriptional regulation by RUNX2"/>
</dbReference>
<dbReference type="Reactome" id="R-HSA-8931987">
    <property type="pathway name" value="RUNX1 regulates estrogen receptor mediated transcription"/>
</dbReference>
<dbReference type="Reactome" id="R-HSA-8934593">
    <property type="pathway name" value="Regulation of RUNX1 Expression and Activity"/>
</dbReference>
<dbReference type="Reactome" id="R-HSA-8935964">
    <property type="pathway name" value="RUNX1 regulates expression of components of tight junctions"/>
</dbReference>
<dbReference type="Reactome" id="R-HSA-8936459">
    <property type="pathway name" value="RUNX1 regulates genes involved in megakaryocyte differentiation and platelet function"/>
</dbReference>
<dbReference type="Reactome" id="R-HSA-8939236">
    <property type="pathway name" value="RUNX1 regulates transcription of genes involved in differentiation of HSCs"/>
</dbReference>
<dbReference type="Reactome" id="R-HSA-8939242">
    <property type="pathway name" value="RUNX1 regulates transcription of genes involved in differentiation of keratinocytes"/>
</dbReference>
<dbReference type="Reactome" id="R-HSA-8939243">
    <property type="pathway name" value="RUNX1 interacts with co-factors whose precise effect on RUNX1 targets is not known"/>
</dbReference>
<dbReference type="Reactome" id="R-HSA-8939245">
    <property type="pathway name" value="RUNX1 regulates transcription of genes involved in BCR signaling"/>
</dbReference>
<dbReference type="Reactome" id="R-HSA-8939246">
    <property type="pathway name" value="RUNX1 regulates transcription of genes involved in differentiation of myeloid cells"/>
</dbReference>
<dbReference type="Reactome" id="R-HSA-8939247">
    <property type="pathway name" value="RUNX1 regulates transcription of genes involved in interleukin signaling"/>
</dbReference>
<dbReference type="Reactome" id="R-HSA-8939256">
    <property type="pathway name" value="RUNX1 regulates transcription of genes involved in WNT signaling"/>
</dbReference>
<dbReference type="Reactome" id="R-HSA-8939902">
    <property type="pathway name" value="Regulation of RUNX2 expression and activity"/>
</dbReference>
<dbReference type="Reactome" id="R-HSA-8940973">
    <property type="pathway name" value="RUNX2 regulates osteoblast differentiation"/>
</dbReference>
<dbReference type="Reactome" id="R-HSA-8941284">
    <property type="pathway name" value="RUNX2 regulates chondrocyte maturation"/>
</dbReference>
<dbReference type="Reactome" id="R-HSA-8941326">
    <property type="pathway name" value="RUNX2 regulates bone development"/>
</dbReference>
<dbReference type="Reactome" id="R-HSA-8941332">
    <property type="pathway name" value="RUNX2 regulates genes involved in cell migration"/>
</dbReference>
<dbReference type="Reactome" id="R-HSA-8941333">
    <property type="pathway name" value="RUNX2 regulates genes involved in differentiation of myeloid cells"/>
</dbReference>
<dbReference type="Reactome" id="R-HSA-8941858">
    <property type="pathway name" value="Regulation of RUNX3 expression and activity"/>
</dbReference>
<dbReference type="Reactome" id="R-HSA-8949275">
    <property type="pathway name" value="RUNX3 Regulates Immune Response and Cell Migration"/>
</dbReference>
<dbReference type="Reactome" id="R-HSA-8951911">
    <property type="pathway name" value="RUNX3 regulates RUNX1-mediated transcription"/>
</dbReference>
<dbReference type="Reactome" id="R-HSA-8951936">
    <property type="pathway name" value="RUNX3 regulates p14-ARF"/>
</dbReference>
<dbReference type="Reactome" id="R-HSA-9018519">
    <property type="pathway name" value="Estrogen-dependent gene expression"/>
</dbReference>
<dbReference type="Reactome" id="R-HSA-9616222">
    <property type="pathway name" value="Transcriptional regulation of granulopoiesis"/>
</dbReference>
<dbReference type="SignaLink" id="Q13951"/>
<dbReference type="SIGNOR" id="Q13951"/>
<dbReference type="BioGRID-ORCS" id="865">
    <property type="hits" value="123 hits in 1192 CRISPR screens"/>
</dbReference>
<dbReference type="CD-CODE" id="DEE660B4">
    <property type="entry name" value="Stress granule"/>
</dbReference>
<dbReference type="ChiTaRS" id="CBFB">
    <property type="organism name" value="human"/>
</dbReference>
<dbReference type="EvolutionaryTrace" id="Q13951"/>
<dbReference type="GeneWiki" id="CBFB"/>
<dbReference type="GenomeRNAi" id="865"/>
<dbReference type="Pharos" id="Q13951">
    <property type="development level" value="Tchem"/>
</dbReference>
<dbReference type="PRO" id="PR:Q13951"/>
<dbReference type="Proteomes" id="UP000005640">
    <property type="component" value="Chromosome 16"/>
</dbReference>
<dbReference type="RNAct" id="Q13951">
    <property type="molecule type" value="protein"/>
</dbReference>
<dbReference type="Bgee" id="ENSG00000067955">
    <property type="expression patterns" value="Expressed in secondary oocyte and 202 other cell types or tissues"/>
</dbReference>
<dbReference type="ExpressionAtlas" id="Q13951">
    <property type="expression patterns" value="baseline and differential"/>
</dbReference>
<dbReference type="GO" id="GO:0016513">
    <property type="term" value="C:core-binding factor complex"/>
    <property type="evidence" value="ECO:0000318"/>
    <property type="project" value="GO_Central"/>
</dbReference>
<dbReference type="GO" id="GO:0016020">
    <property type="term" value="C:membrane"/>
    <property type="evidence" value="ECO:0007005"/>
    <property type="project" value="UniProtKB"/>
</dbReference>
<dbReference type="GO" id="GO:0005654">
    <property type="term" value="C:nucleoplasm"/>
    <property type="evidence" value="ECO:0000304"/>
    <property type="project" value="Reactome"/>
</dbReference>
<dbReference type="GO" id="GO:0043565">
    <property type="term" value="F:sequence-specific DNA binding"/>
    <property type="evidence" value="ECO:0007669"/>
    <property type="project" value="Ensembl"/>
</dbReference>
<dbReference type="GO" id="GO:0003713">
    <property type="term" value="F:transcription coactivator activity"/>
    <property type="evidence" value="ECO:0000318"/>
    <property type="project" value="GO_Central"/>
</dbReference>
<dbReference type="GO" id="GO:0048469">
    <property type="term" value="P:cell maturation"/>
    <property type="evidence" value="ECO:0007669"/>
    <property type="project" value="Ensembl"/>
</dbReference>
<dbReference type="GO" id="GO:0060216">
    <property type="term" value="P:definitive hemopoiesis"/>
    <property type="evidence" value="ECO:0007669"/>
    <property type="project" value="Ensembl"/>
</dbReference>
<dbReference type="GO" id="GO:0030098">
    <property type="term" value="P:lymphocyte differentiation"/>
    <property type="evidence" value="ECO:0007669"/>
    <property type="project" value="Ensembl"/>
</dbReference>
<dbReference type="GO" id="GO:0030099">
    <property type="term" value="P:myeloid cell differentiation"/>
    <property type="evidence" value="ECO:0007669"/>
    <property type="project" value="Ensembl"/>
</dbReference>
<dbReference type="GO" id="GO:0043371">
    <property type="term" value="P:negative regulation of CD4-positive, alpha-beta T cell differentiation"/>
    <property type="evidence" value="ECO:0000250"/>
    <property type="project" value="UniProtKB"/>
</dbReference>
<dbReference type="GO" id="GO:0000122">
    <property type="term" value="P:negative regulation of transcription by RNA polymerase II"/>
    <property type="evidence" value="ECO:0000250"/>
    <property type="project" value="UniProtKB"/>
</dbReference>
<dbReference type="GO" id="GO:0001649">
    <property type="term" value="P:osteoblast differentiation"/>
    <property type="evidence" value="ECO:0007669"/>
    <property type="project" value="Ensembl"/>
</dbReference>
<dbReference type="GO" id="GO:0043378">
    <property type="term" value="P:positive regulation of CD8-positive, alpha-beta T cell differentiation"/>
    <property type="evidence" value="ECO:0000250"/>
    <property type="project" value="UniProtKB"/>
</dbReference>
<dbReference type="GO" id="GO:0045944">
    <property type="term" value="P:positive regulation of transcription by RNA polymerase II"/>
    <property type="evidence" value="ECO:0007669"/>
    <property type="project" value="Ensembl"/>
</dbReference>
<dbReference type="GO" id="GO:0000209">
    <property type="term" value="P:protein polyubiquitination"/>
    <property type="evidence" value="ECO:0000315"/>
    <property type="project" value="CACAO"/>
</dbReference>
<dbReference type="GO" id="GO:0006357">
    <property type="term" value="P:regulation of transcription by RNA polymerase II"/>
    <property type="evidence" value="ECO:0000318"/>
    <property type="project" value="GO_Central"/>
</dbReference>
<dbReference type="GO" id="GO:0006366">
    <property type="term" value="P:transcription by RNA polymerase II"/>
    <property type="evidence" value="ECO:0000304"/>
    <property type="project" value="ProtInc"/>
</dbReference>
<dbReference type="FunFam" id="2.40.250.10:FF:000001">
    <property type="entry name" value="Core-binding factor subunit beta"/>
    <property type="match status" value="1"/>
</dbReference>
<dbReference type="Gene3D" id="2.40.250.10">
    <property type="entry name" value="Core binding factor, beta subunit"/>
    <property type="match status" value="1"/>
</dbReference>
<dbReference type="InterPro" id="IPR003417">
    <property type="entry name" value="CBF_beta"/>
</dbReference>
<dbReference type="InterPro" id="IPR036552">
    <property type="entry name" value="CBF_bsu_sf"/>
</dbReference>
<dbReference type="PANTHER" id="PTHR10276:SF3">
    <property type="entry name" value="CORE-BINDING FACTOR SUBUNIT BETA"/>
    <property type="match status" value="1"/>
</dbReference>
<dbReference type="PANTHER" id="PTHR10276">
    <property type="entry name" value="CORE-BINDING FACTOR, BETA SUBUNIT"/>
    <property type="match status" value="1"/>
</dbReference>
<dbReference type="Pfam" id="PF02312">
    <property type="entry name" value="CBF_beta"/>
    <property type="match status" value="1"/>
</dbReference>
<dbReference type="SUPFAM" id="SSF50723">
    <property type="entry name" value="Core binding factor beta, CBF"/>
    <property type="match status" value="1"/>
</dbReference>
<proteinExistence type="evidence at protein level"/>